<organism>
    <name type="scientific">Nicotiana tabacum</name>
    <name type="common">Common tobacco</name>
    <dbReference type="NCBI Taxonomy" id="4097"/>
    <lineage>
        <taxon>Eukaryota</taxon>
        <taxon>Viridiplantae</taxon>
        <taxon>Streptophyta</taxon>
        <taxon>Embryophyta</taxon>
        <taxon>Tracheophyta</taxon>
        <taxon>Spermatophyta</taxon>
        <taxon>Magnoliopsida</taxon>
        <taxon>eudicotyledons</taxon>
        <taxon>Gunneridae</taxon>
        <taxon>Pentapetalae</taxon>
        <taxon>asterids</taxon>
        <taxon>lamiids</taxon>
        <taxon>Solanales</taxon>
        <taxon>Solanaceae</taxon>
        <taxon>Nicotianoideae</taxon>
        <taxon>Nicotianeae</taxon>
        <taxon>Nicotiana</taxon>
    </lineage>
</organism>
<accession>P62732</accession>
<accession>P06361</accession>
<reference key="1">
    <citation type="journal article" date="1986" name="EMBO J.">
        <title>The complete nucleotide sequence of the tobacco chloroplast genome: its gene organization and expression.</title>
        <authorList>
            <person name="Shinozaki K."/>
            <person name="Ohme M."/>
            <person name="Tanaka M."/>
            <person name="Wakasugi T."/>
            <person name="Hayashida N."/>
            <person name="Matsubayashi T."/>
            <person name="Zaita N."/>
            <person name="Chunwongse J."/>
            <person name="Obokata J."/>
            <person name="Yamaguchi-Shinozaki K."/>
            <person name="Ohto C."/>
            <person name="Torazawa K."/>
            <person name="Meng B.-Y."/>
            <person name="Sugita M."/>
            <person name="Deno H."/>
            <person name="Kamogashira T."/>
            <person name="Yamada K."/>
            <person name="Kusuda J."/>
            <person name="Takaiwa F."/>
            <person name="Kato A."/>
            <person name="Tohdoh N."/>
            <person name="Shimada H."/>
            <person name="Sugiura M."/>
        </authorList>
    </citation>
    <scope>NUCLEOTIDE SEQUENCE [LARGE SCALE GENOMIC DNA]</scope>
    <source>
        <strain>cv. Bright Yellow 4</strain>
    </source>
</reference>
<reference key="2">
    <citation type="journal article" date="1986" name="Nucleic Acids Res.">
        <title>The enigma of the gene coding for ribosomal protein S12 in the chloroplasts of Nicotiana.</title>
        <authorList>
            <person name="Fromm H."/>
            <person name="Edelman M."/>
            <person name="Koller B."/>
            <person name="Goloubinoff P."/>
            <person name="Galun E."/>
        </authorList>
    </citation>
    <scope>NUCLEOTIDE SEQUENCE [GENOMIC DNA] OF 1-9</scope>
</reference>
<dbReference type="EMBL" id="Z00044">
    <property type="protein sequence ID" value="CAA77390.1"/>
    <property type="molecule type" value="Genomic_DNA"/>
</dbReference>
<dbReference type="EMBL" id="Z00044">
    <property type="protein sequence ID" value="CAA77403.1"/>
    <property type="molecule type" value="Genomic_DNA"/>
</dbReference>
<dbReference type="EMBL" id="X03481">
    <property type="protein sequence ID" value="CAA27201.1"/>
    <property type="molecule type" value="Genomic_DNA"/>
</dbReference>
<dbReference type="PIR" id="A02713">
    <property type="entry name" value="R3NT7"/>
</dbReference>
<dbReference type="SMR" id="P62732"/>
<dbReference type="KEGG" id="nta:800428"/>
<dbReference type="KEGG" id="nta:800447"/>
<dbReference type="OMA" id="DDTHRMA"/>
<dbReference type="OrthoDB" id="1261259at2759"/>
<dbReference type="Proteomes" id="UP000084051">
    <property type="component" value="Unplaced"/>
</dbReference>
<dbReference type="GO" id="GO:0009507">
    <property type="term" value="C:chloroplast"/>
    <property type="evidence" value="ECO:0007669"/>
    <property type="project" value="UniProtKB-SubCell"/>
</dbReference>
<dbReference type="GO" id="GO:0015935">
    <property type="term" value="C:small ribosomal subunit"/>
    <property type="evidence" value="ECO:0007669"/>
    <property type="project" value="InterPro"/>
</dbReference>
<dbReference type="GO" id="GO:0019843">
    <property type="term" value="F:rRNA binding"/>
    <property type="evidence" value="ECO:0007669"/>
    <property type="project" value="UniProtKB-UniRule"/>
</dbReference>
<dbReference type="GO" id="GO:0003735">
    <property type="term" value="F:structural constituent of ribosome"/>
    <property type="evidence" value="ECO:0007669"/>
    <property type="project" value="InterPro"/>
</dbReference>
<dbReference type="GO" id="GO:0006412">
    <property type="term" value="P:translation"/>
    <property type="evidence" value="ECO:0007669"/>
    <property type="project" value="UniProtKB-UniRule"/>
</dbReference>
<dbReference type="CDD" id="cd14871">
    <property type="entry name" value="uS7_Chloroplast"/>
    <property type="match status" value="1"/>
</dbReference>
<dbReference type="FunFam" id="1.10.455.10:FF:000001">
    <property type="entry name" value="30S ribosomal protein S7"/>
    <property type="match status" value="1"/>
</dbReference>
<dbReference type="Gene3D" id="1.10.455.10">
    <property type="entry name" value="Ribosomal protein S7 domain"/>
    <property type="match status" value="1"/>
</dbReference>
<dbReference type="HAMAP" id="MF_00480_B">
    <property type="entry name" value="Ribosomal_uS7_B"/>
    <property type="match status" value="1"/>
</dbReference>
<dbReference type="InterPro" id="IPR000235">
    <property type="entry name" value="Ribosomal_uS7"/>
</dbReference>
<dbReference type="InterPro" id="IPR005717">
    <property type="entry name" value="Ribosomal_uS7_bac/org-type"/>
</dbReference>
<dbReference type="InterPro" id="IPR020606">
    <property type="entry name" value="Ribosomal_uS7_CS"/>
</dbReference>
<dbReference type="InterPro" id="IPR023798">
    <property type="entry name" value="Ribosomal_uS7_dom"/>
</dbReference>
<dbReference type="InterPro" id="IPR036823">
    <property type="entry name" value="Ribosomal_uS7_dom_sf"/>
</dbReference>
<dbReference type="NCBIfam" id="TIGR01029">
    <property type="entry name" value="rpsG_bact"/>
    <property type="match status" value="1"/>
</dbReference>
<dbReference type="PANTHER" id="PTHR11205">
    <property type="entry name" value="RIBOSOMAL PROTEIN S7"/>
    <property type="match status" value="1"/>
</dbReference>
<dbReference type="Pfam" id="PF00177">
    <property type="entry name" value="Ribosomal_S7"/>
    <property type="match status" value="1"/>
</dbReference>
<dbReference type="PIRSF" id="PIRSF002122">
    <property type="entry name" value="RPS7p_RPS7a_RPS5e_RPS7o"/>
    <property type="match status" value="1"/>
</dbReference>
<dbReference type="SUPFAM" id="SSF47973">
    <property type="entry name" value="Ribosomal protein S7"/>
    <property type="match status" value="1"/>
</dbReference>
<dbReference type="PROSITE" id="PS00052">
    <property type="entry name" value="RIBOSOMAL_S7"/>
    <property type="match status" value="1"/>
</dbReference>
<comment type="function">
    <text evidence="1">One of the primary rRNA binding proteins, it binds directly to 16S rRNA where it nucleates assembly of the head domain of the 30S subunit.</text>
</comment>
<comment type="subunit">
    <text>Part of the 30S ribosomal subunit.</text>
</comment>
<comment type="subcellular location">
    <subcellularLocation>
        <location>Plastid</location>
        <location>Chloroplast</location>
    </subcellularLocation>
</comment>
<comment type="similarity">
    <text evidence="3">Belongs to the universal ribosomal protein uS7 family.</text>
</comment>
<gene>
    <name type="primary">rps7-A</name>
</gene>
<gene>
    <name type="primary">rps7-B</name>
</gene>
<sequence length="155" mass="17386">MSRRGTAEKKTAKSDPIYRNRLVNMLVNRILKHGKKSLAYQIIYRAVKKIQQKTETNPLSVLRQAIRGVTPDITVKARRVGGSTHQVPIEIGSTQGKALAIRWLLAASRKRPGRNMAFKLSSELVDAAKGSGDAIRKKEETHRMAEANRAFAHFR</sequence>
<name>RR7_TOBAC</name>
<geneLocation type="chloroplast"/>
<protein>
    <recommendedName>
        <fullName evidence="2">Small ribosomal subunit protein uS7cz/uS7cy</fullName>
    </recommendedName>
    <alternativeName>
        <fullName>30S ribosomal protein S7, chloroplastic</fullName>
    </alternativeName>
</protein>
<proteinExistence type="inferred from homology"/>
<keyword id="KW-0150">Chloroplast</keyword>
<keyword id="KW-0934">Plastid</keyword>
<keyword id="KW-1185">Reference proteome</keyword>
<keyword id="KW-0687">Ribonucleoprotein</keyword>
<keyword id="KW-0689">Ribosomal protein</keyword>
<keyword id="KW-0694">RNA-binding</keyword>
<keyword id="KW-0699">rRNA-binding</keyword>
<feature type="chain" id="PRO_0000124512" description="Small ribosomal subunit protein uS7cz/uS7cy">
    <location>
        <begin position="1"/>
        <end position="155"/>
    </location>
</feature>
<evidence type="ECO:0000250" key="1"/>
<evidence type="ECO:0000255" key="2">
    <source>
        <dbReference type="HAMAP-Rule" id="MF_00480"/>
    </source>
</evidence>
<evidence type="ECO:0000305" key="3"/>